<proteinExistence type="inferred from homology"/>
<dbReference type="EC" id="5.4.2.8"/>
<dbReference type="EMBL" id="X59886">
    <property type="protein sequence ID" value="CAA42541.1"/>
    <property type="molecule type" value="Genomic_DNA"/>
</dbReference>
<dbReference type="EMBL" id="AE006468">
    <property type="protein sequence ID" value="AAL21008.1"/>
    <property type="molecule type" value="Genomic_DNA"/>
</dbReference>
<dbReference type="PIR" id="S16291">
    <property type="entry name" value="S16291"/>
</dbReference>
<dbReference type="RefSeq" id="NP_461049.1">
    <property type="nucleotide sequence ID" value="NC_003197.2"/>
</dbReference>
<dbReference type="RefSeq" id="WP_000164218.1">
    <property type="nucleotide sequence ID" value="NC_003197.2"/>
</dbReference>
<dbReference type="SMR" id="P26341"/>
<dbReference type="STRING" id="99287.STM2104"/>
<dbReference type="PaxDb" id="99287-STM2104"/>
<dbReference type="GeneID" id="1253625"/>
<dbReference type="KEGG" id="stm:STM2104"/>
<dbReference type="PATRIC" id="fig|99287.12.peg.2226"/>
<dbReference type="HOGENOM" id="CLU_016950_9_2_6"/>
<dbReference type="PhylomeDB" id="P26341"/>
<dbReference type="BioCyc" id="SENT99287:STM2104-MONOMER"/>
<dbReference type="UniPathway" id="UPA00126">
    <property type="reaction ID" value="UER00424"/>
</dbReference>
<dbReference type="Proteomes" id="UP000001014">
    <property type="component" value="Chromosome"/>
</dbReference>
<dbReference type="GO" id="GO:0000287">
    <property type="term" value="F:magnesium ion binding"/>
    <property type="evidence" value="ECO:0007669"/>
    <property type="project" value="InterPro"/>
</dbReference>
<dbReference type="GO" id="GO:0004615">
    <property type="term" value="F:phosphomannomutase activity"/>
    <property type="evidence" value="ECO:0007669"/>
    <property type="project" value="UniProtKB-EC"/>
</dbReference>
<dbReference type="GO" id="GO:0009298">
    <property type="term" value="P:GDP-mannose biosynthetic process"/>
    <property type="evidence" value="ECO:0007669"/>
    <property type="project" value="UniProtKB-UniPathway"/>
</dbReference>
<dbReference type="GO" id="GO:0009103">
    <property type="term" value="P:lipopolysaccharide biosynthetic process"/>
    <property type="evidence" value="ECO:0007669"/>
    <property type="project" value="UniProtKB-KW"/>
</dbReference>
<dbReference type="CDD" id="cd03089">
    <property type="entry name" value="PMM_PGM"/>
    <property type="match status" value="1"/>
</dbReference>
<dbReference type="Gene3D" id="3.40.120.10">
    <property type="entry name" value="Alpha-D-Glucose-1,6-Bisphosphate, subunit A, domain 3"/>
    <property type="match status" value="3"/>
</dbReference>
<dbReference type="Gene3D" id="3.30.310.50">
    <property type="entry name" value="Alpha-D-phosphohexomutase, C-terminal domain"/>
    <property type="match status" value="1"/>
</dbReference>
<dbReference type="InterPro" id="IPR005844">
    <property type="entry name" value="A-D-PHexomutase_a/b/a-I"/>
</dbReference>
<dbReference type="InterPro" id="IPR016055">
    <property type="entry name" value="A-D-PHexomutase_a/b/a-I/II/III"/>
</dbReference>
<dbReference type="InterPro" id="IPR005845">
    <property type="entry name" value="A-D-PHexomutase_a/b/a-II"/>
</dbReference>
<dbReference type="InterPro" id="IPR005846">
    <property type="entry name" value="A-D-PHexomutase_a/b/a-III"/>
</dbReference>
<dbReference type="InterPro" id="IPR005843">
    <property type="entry name" value="A-D-PHexomutase_C"/>
</dbReference>
<dbReference type="InterPro" id="IPR036900">
    <property type="entry name" value="A-D-PHexomutase_C_sf"/>
</dbReference>
<dbReference type="InterPro" id="IPR016066">
    <property type="entry name" value="A-D-PHexomutase_CS"/>
</dbReference>
<dbReference type="InterPro" id="IPR005841">
    <property type="entry name" value="Alpha-D-phosphohexomutase_SF"/>
</dbReference>
<dbReference type="NCBIfam" id="NF011943">
    <property type="entry name" value="PRK15414.1"/>
    <property type="match status" value="1"/>
</dbReference>
<dbReference type="PANTHER" id="PTHR43771">
    <property type="entry name" value="PHOSPHOMANNOMUTASE"/>
    <property type="match status" value="1"/>
</dbReference>
<dbReference type="PANTHER" id="PTHR43771:SF1">
    <property type="entry name" value="PHOSPHOMANNOMUTASE"/>
    <property type="match status" value="1"/>
</dbReference>
<dbReference type="Pfam" id="PF02878">
    <property type="entry name" value="PGM_PMM_I"/>
    <property type="match status" value="1"/>
</dbReference>
<dbReference type="Pfam" id="PF02879">
    <property type="entry name" value="PGM_PMM_II"/>
    <property type="match status" value="1"/>
</dbReference>
<dbReference type="Pfam" id="PF02880">
    <property type="entry name" value="PGM_PMM_III"/>
    <property type="match status" value="1"/>
</dbReference>
<dbReference type="Pfam" id="PF00408">
    <property type="entry name" value="PGM_PMM_IV"/>
    <property type="match status" value="1"/>
</dbReference>
<dbReference type="PRINTS" id="PR00509">
    <property type="entry name" value="PGMPMM"/>
</dbReference>
<dbReference type="SUPFAM" id="SSF55957">
    <property type="entry name" value="Phosphoglucomutase, C-terminal domain"/>
    <property type="match status" value="1"/>
</dbReference>
<dbReference type="SUPFAM" id="SSF53738">
    <property type="entry name" value="Phosphoglucomutase, first 3 domains"/>
    <property type="match status" value="3"/>
</dbReference>
<dbReference type="PROSITE" id="PS00710">
    <property type="entry name" value="PGM_PMM"/>
    <property type="match status" value="1"/>
</dbReference>
<comment type="function">
    <text>Involved in the biosynthesis of the capsular polysaccharide colanic acid.</text>
</comment>
<comment type="catalytic activity">
    <reaction>
        <text>alpha-D-mannose 1-phosphate = D-mannose 6-phosphate</text>
        <dbReference type="Rhea" id="RHEA:11140"/>
        <dbReference type="ChEBI" id="CHEBI:58409"/>
        <dbReference type="ChEBI" id="CHEBI:58735"/>
        <dbReference type="EC" id="5.4.2.8"/>
    </reaction>
</comment>
<comment type="cofactor">
    <cofactor evidence="1">
        <name>Mg(2+)</name>
        <dbReference type="ChEBI" id="CHEBI:18420"/>
    </cofactor>
    <text evidence="1">Binds 1 Mg(2+) ion per subunit.</text>
</comment>
<comment type="pathway">
    <text>Nucleotide-sugar biosynthesis; GDP-alpha-D-mannose biosynthesis; alpha-D-mannose 1-phosphate from D-fructose 6-phosphate: step 2/2.</text>
</comment>
<comment type="similarity">
    <text evidence="2">Belongs to the phosphohexose mutase family.</text>
</comment>
<protein>
    <recommendedName>
        <fullName>Phosphomannomutase</fullName>
        <shortName>PMM</shortName>
        <ecNumber>5.4.2.8</ecNumber>
    </recommendedName>
</protein>
<name>MANB_SALTY</name>
<feature type="chain" id="PRO_0000147822" description="Phosphomannomutase">
    <location>
        <begin position="1"/>
        <end position="456"/>
    </location>
</feature>
<feature type="active site" description="Phosphoserine intermediate" evidence="1">
    <location>
        <position position="98"/>
    </location>
</feature>
<feature type="binding site" description="via phosphate group" evidence="1">
    <location>
        <position position="98"/>
    </location>
    <ligand>
        <name>Mg(2+)</name>
        <dbReference type="ChEBI" id="CHEBI:18420"/>
    </ligand>
</feature>
<feature type="binding site" evidence="1">
    <location>
        <position position="245"/>
    </location>
    <ligand>
        <name>Mg(2+)</name>
        <dbReference type="ChEBI" id="CHEBI:18420"/>
    </ligand>
</feature>
<feature type="binding site" evidence="1">
    <location>
        <position position="247"/>
    </location>
    <ligand>
        <name>Mg(2+)</name>
        <dbReference type="ChEBI" id="CHEBI:18420"/>
    </ligand>
</feature>
<feature type="binding site" evidence="1">
    <location>
        <position position="249"/>
    </location>
    <ligand>
        <name>Mg(2+)</name>
        <dbReference type="ChEBI" id="CHEBI:18420"/>
    </ligand>
</feature>
<feature type="sequence conflict" description="In Ref. 1; CAA42541." evidence="2" ref="1">
    <original>KL</original>
    <variation>NV</variation>
    <location>
        <begin position="55"/>
        <end position="56"/>
    </location>
</feature>
<evidence type="ECO:0000250" key="1"/>
<evidence type="ECO:0000305" key="2"/>
<gene>
    <name type="primary">manB</name>
    <name type="synonym">cpsG</name>
    <name type="synonym">rfbL</name>
    <name type="ordered locus">STM2104</name>
</gene>
<organism>
    <name type="scientific">Salmonella typhimurium (strain LT2 / SGSC1412 / ATCC 700720)</name>
    <dbReference type="NCBI Taxonomy" id="99287"/>
    <lineage>
        <taxon>Bacteria</taxon>
        <taxon>Pseudomonadati</taxon>
        <taxon>Pseudomonadota</taxon>
        <taxon>Gammaproteobacteria</taxon>
        <taxon>Enterobacterales</taxon>
        <taxon>Enterobacteriaceae</taxon>
        <taxon>Salmonella</taxon>
    </lineage>
</organism>
<keyword id="KW-0972">Capsule biogenesis/degradation</keyword>
<keyword id="KW-0413">Isomerase</keyword>
<keyword id="KW-0448">Lipopolysaccharide biosynthesis</keyword>
<keyword id="KW-0460">Magnesium</keyword>
<keyword id="KW-0479">Metal-binding</keyword>
<keyword id="KW-0597">Phosphoprotein</keyword>
<keyword id="KW-1185">Reference proteome</keyword>
<accession>P26341</accession>
<sequence>MTKLTCFKAYDIRGRLGEELNEDIAWRIGRAYGEYLKPKTVVLGGDVRLTSEALKLALAKGLQDAGVDVLDIGMSGTEEIYFATFHLGVDGGIEVTASHNPMDYNGMKLVREGARPISGDTGLRDVQRLAEAGDFPPVNEAARGSYRQISLRDAYIDHLLGYISVNNLTPLKLVFNAGNGAAGPVIDAIEARLKALGAPVEFIKIHNTPDGTFPNGIPNPLLPECRDDTRKAVIEHGADMGIAFDGDFDRCFLFDEKGQFIEGYYIVGLLAEAFLEKHPGAKIIHDPRLTWNTEAVVTAAGGTPVMSKTGHAFIKERMRTEDAIYGGEMSAHHYFRDFAYCDSGMIPWLLVAELVCLKRQSLGELVRDRMAAFPASGEINSRLAEPAAAIARVEAHFAEEAQAVDRTDGLSMSFADWRFNLRSSNTEPVVRLNVESRGDIPLMEARTRTLLALLNQ</sequence>
<reference key="1">
    <citation type="journal article" date="1991" name="Mol. Gen. Genet.">
        <title>The cps gene cluster of Salmonella strain LT2 includes a second mannose pathway: sequence of two genes and relationship to genes in the rfb gene cluster.</title>
        <authorList>
            <person name="Stevenson G."/>
            <person name="Lee S.J."/>
            <person name="Romana L.K."/>
            <person name="Reeves P.R."/>
        </authorList>
    </citation>
    <scope>NUCLEOTIDE SEQUENCE [GENOMIC DNA]</scope>
    <source>
        <strain>LT2</strain>
    </source>
</reference>
<reference key="2">
    <citation type="journal article" date="2001" name="Nature">
        <title>Complete genome sequence of Salmonella enterica serovar Typhimurium LT2.</title>
        <authorList>
            <person name="McClelland M."/>
            <person name="Sanderson K.E."/>
            <person name="Spieth J."/>
            <person name="Clifton S.W."/>
            <person name="Latreille P."/>
            <person name="Courtney L."/>
            <person name="Porwollik S."/>
            <person name="Ali J."/>
            <person name="Dante M."/>
            <person name="Du F."/>
            <person name="Hou S."/>
            <person name="Layman D."/>
            <person name="Leonard S."/>
            <person name="Nguyen C."/>
            <person name="Scott K."/>
            <person name="Holmes A."/>
            <person name="Grewal N."/>
            <person name="Mulvaney E."/>
            <person name="Ryan E."/>
            <person name="Sun H."/>
            <person name="Florea L."/>
            <person name="Miller W."/>
            <person name="Stoneking T."/>
            <person name="Nhan M."/>
            <person name="Waterston R."/>
            <person name="Wilson R.K."/>
        </authorList>
    </citation>
    <scope>NUCLEOTIDE SEQUENCE [LARGE SCALE GENOMIC DNA]</scope>
    <source>
        <strain>LT2 / SGSC1412 / ATCC 700720</strain>
    </source>
</reference>